<accession>A9M3U7</accession>
<reference key="1">
    <citation type="journal article" date="2008" name="Genomics">
        <title>Characterization of ST-4821 complex, a unique Neisseria meningitidis clone.</title>
        <authorList>
            <person name="Peng J."/>
            <person name="Yang L."/>
            <person name="Yang F."/>
            <person name="Yang J."/>
            <person name="Yan Y."/>
            <person name="Nie H."/>
            <person name="Zhang X."/>
            <person name="Xiong Z."/>
            <person name="Jiang Y."/>
            <person name="Cheng F."/>
            <person name="Xu X."/>
            <person name="Chen S."/>
            <person name="Sun L."/>
            <person name="Li W."/>
            <person name="Shen Y."/>
            <person name="Shao Z."/>
            <person name="Liang X."/>
            <person name="Xu J."/>
            <person name="Jin Q."/>
        </authorList>
    </citation>
    <scope>NUCLEOTIDE SEQUENCE [LARGE SCALE GENOMIC DNA]</scope>
    <source>
        <strain>053442</strain>
    </source>
</reference>
<proteinExistence type="inferred from homology"/>
<feature type="chain" id="PRO_1000142849" description="Large ribosomal subunit protein uL15">
    <location>
        <begin position="1"/>
        <end position="144"/>
    </location>
</feature>
<feature type="region of interest" description="Disordered" evidence="2">
    <location>
        <begin position="20"/>
        <end position="49"/>
    </location>
</feature>
<feature type="compositionally biased region" description="Gly residues" evidence="2">
    <location>
        <begin position="21"/>
        <end position="31"/>
    </location>
</feature>
<protein>
    <recommendedName>
        <fullName evidence="1">Large ribosomal subunit protein uL15</fullName>
    </recommendedName>
    <alternativeName>
        <fullName evidence="3">50S ribosomal protein L15</fullName>
    </alternativeName>
</protein>
<name>RL15_NEIM0</name>
<gene>
    <name evidence="1" type="primary">rplO</name>
    <name type="ordered locus">NMCC_1988a</name>
</gene>
<sequence>MFLNTIQPAVGATHAGRRVGRGIGSGLGKTGGRGHKGQKSRSGGFHKVGFEGGQMPLQRRLPKRGFKSLTASANAQLRLSELESIAVNEIDILVLKQAGLIASTVSNVKVIASGEISKAVALKGIKVTKGARAAIEAVGGKIEM</sequence>
<comment type="function">
    <text evidence="1">Binds to the 23S rRNA.</text>
</comment>
<comment type="subunit">
    <text evidence="1">Part of the 50S ribosomal subunit.</text>
</comment>
<comment type="similarity">
    <text evidence="1">Belongs to the universal ribosomal protein uL15 family.</text>
</comment>
<evidence type="ECO:0000255" key="1">
    <source>
        <dbReference type="HAMAP-Rule" id="MF_01341"/>
    </source>
</evidence>
<evidence type="ECO:0000256" key="2">
    <source>
        <dbReference type="SAM" id="MobiDB-lite"/>
    </source>
</evidence>
<evidence type="ECO:0000305" key="3"/>
<keyword id="KW-0687">Ribonucleoprotein</keyword>
<keyword id="KW-0689">Ribosomal protein</keyword>
<keyword id="KW-0694">RNA-binding</keyword>
<keyword id="KW-0699">rRNA-binding</keyword>
<organism>
    <name type="scientific">Neisseria meningitidis serogroup C (strain 053442)</name>
    <dbReference type="NCBI Taxonomy" id="374833"/>
    <lineage>
        <taxon>Bacteria</taxon>
        <taxon>Pseudomonadati</taxon>
        <taxon>Pseudomonadota</taxon>
        <taxon>Betaproteobacteria</taxon>
        <taxon>Neisseriales</taxon>
        <taxon>Neisseriaceae</taxon>
        <taxon>Neisseria</taxon>
    </lineage>
</organism>
<dbReference type="EMBL" id="CP000381">
    <property type="protein sequence ID" value="ABX74240.1"/>
    <property type="molecule type" value="Genomic_DNA"/>
</dbReference>
<dbReference type="RefSeq" id="WP_002215449.1">
    <property type="nucleotide sequence ID" value="NC_010120.1"/>
</dbReference>
<dbReference type="SMR" id="A9M3U7"/>
<dbReference type="GeneID" id="93387236"/>
<dbReference type="KEGG" id="nmn:NMCC_1988a"/>
<dbReference type="HOGENOM" id="CLU_055188_4_2_4"/>
<dbReference type="Proteomes" id="UP000001177">
    <property type="component" value="Chromosome"/>
</dbReference>
<dbReference type="GO" id="GO:0022625">
    <property type="term" value="C:cytosolic large ribosomal subunit"/>
    <property type="evidence" value="ECO:0007669"/>
    <property type="project" value="TreeGrafter"/>
</dbReference>
<dbReference type="GO" id="GO:0019843">
    <property type="term" value="F:rRNA binding"/>
    <property type="evidence" value="ECO:0007669"/>
    <property type="project" value="UniProtKB-UniRule"/>
</dbReference>
<dbReference type="GO" id="GO:0003735">
    <property type="term" value="F:structural constituent of ribosome"/>
    <property type="evidence" value="ECO:0007669"/>
    <property type="project" value="InterPro"/>
</dbReference>
<dbReference type="GO" id="GO:0006412">
    <property type="term" value="P:translation"/>
    <property type="evidence" value="ECO:0007669"/>
    <property type="project" value="UniProtKB-UniRule"/>
</dbReference>
<dbReference type="Gene3D" id="3.100.10.10">
    <property type="match status" value="1"/>
</dbReference>
<dbReference type="HAMAP" id="MF_01341">
    <property type="entry name" value="Ribosomal_uL15"/>
    <property type="match status" value="1"/>
</dbReference>
<dbReference type="InterPro" id="IPR030878">
    <property type="entry name" value="Ribosomal_uL15"/>
</dbReference>
<dbReference type="InterPro" id="IPR021131">
    <property type="entry name" value="Ribosomal_uL15/eL18"/>
</dbReference>
<dbReference type="InterPro" id="IPR036227">
    <property type="entry name" value="Ribosomal_uL15/eL18_sf"/>
</dbReference>
<dbReference type="InterPro" id="IPR005749">
    <property type="entry name" value="Ribosomal_uL15_bac-type"/>
</dbReference>
<dbReference type="InterPro" id="IPR001196">
    <property type="entry name" value="Ribosomal_uL15_CS"/>
</dbReference>
<dbReference type="NCBIfam" id="TIGR01071">
    <property type="entry name" value="rplO_bact"/>
    <property type="match status" value="1"/>
</dbReference>
<dbReference type="PANTHER" id="PTHR12934">
    <property type="entry name" value="50S RIBOSOMAL PROTEIN L15"/>
    <property type="match status" value="1"/>
</dbReference>
<dbReference type="PANTHER" id="PTHR12934:SF11">
    <property type="entry name" value="LARGE RIBOSOMAL SUBUNIT PROTEIN UL15M"/>
    <property type="match status" value="1"/>
</dbReference>
<dbReference type="Pfam" id="PF00828">
    <property type="entry name" value="Ribosomal_L27A"/>
    <property type="match status" value="1"/>
</dbReference>
<dbReference type="SUPFAM" id="SSF52080">
    <property type="entry name" value="Ribosomal proteins L15p and L18e"/>
    <property type="match status" value="1"/>
</dbReference>
<dbReference type="PROSITE" id="PS00475">
    <property type="entry name" value="RIBOSOMAL_L15"/>
    <property type="match status" value="1"/>
</dbReference>